<accession>Q6AQD7</accession>
<evidence type="ECO:0000255" key="1">
    <source>
        <dbReference type="HAMAP-Rule" id="MF_01405"/>
    </source>
</evidence>
<evidence type="ECO:0000256" key="2">
    <source>
        <dbReference type="SAM" id="MobiDB-lite"/>
    </source>
</evidence>
<protein>
    <recommendedName>
        <fullName evidence="1">dITP/XTP pyrophosphatase</fullName>
        <ecNumber evidence="1">3.6.1.66</ecNumber>
    </recommendedName>
    <alternativeName>
        <fullName evidence="1">Non-canonical purine NTP pyrophosphatase</fullName>
    </alternativeName>
    <alternativeName>
        <fullName evidence="1">Non-standard purine NTP pyrophosphatase</fullName>
    </alternativeName>
    <alternativeName>
        <fullName evidence="1">Nucleoside-triphosphate diphosphatase</fullName>
    </alternativeName>
    <alternativeName>
        <fullName evidence="1">Nucleoside-triphosphate pyrophosphatase</fullName>
        <shortName evidence="1">NTPase</shortName>
    </alternativeName>
</protein>
<feature type="chain" id="PRO_0000178161" description="dITP/XTP pyrophosphatase">
    <location>
        <begin position="1"/>
        <end position="223"/>
    </location>
</feature>
<feature type="region of interest" description="Disordered" evidence="2">
    <location>
        <begin position="203"/>
        <end position="223"/>
    </location>
</feature>
<feature type="active site" description="Proton acceptor" evidence="1">
    <location>
        <position position="71"/>
    </location>
</feature>
<feature type="binding site" evidence="1">
    <location>
        <begin position="9"/>
        <end position="14"/>
    </location>
    <ligand>
        <name>substrate</name>
    </ligand>
</feature>
<feature type="binding site" evidence="1">
    <location>
        <position position="71"/>
    </location>
    <ligand>
        <name>Mg(2+)</name>
        <dbReference type="ChEBI" id="CHEBI:18420"/>
    </ligand>
</feature>
<feature type="binding site" evidence="1">
    <location>
        <position position="72"/>
    </location>
    <ligand>
        <name>substrate</name>
    </ligand>
</feature>
<feature type="binding site" evidence="1">
    <location>
        <begin position="152"/>
        <end position="155"/>
    </location>
    <ligand>
        <name>substrate</name>
    </ligand>
</feature>
<feature type="binding site" evidence="1">
    <location>
        <position position="175"/>
    </location>
    <ligand>
        <name>substrate</name>
    </ligand>
</feature>
<feature type="binding site" evidence="1">
    <location>
        <begin position="180"/>
        <end position="181"/>
    </location>
    <ligand>
        <name>substrate</name>
    </ligand>
</feature>
<comment type="function">
    <text evidence="1">Pyrophosphatase that catalyzes the hydrolysis of nucleoside triphosphates to their monophosphate derivatives, with a high preference for the non-canonical purine nucleotides XTP (xanthosine triphosphate), dITP (deoxyinosine triphosphate) and ITP. Seems to function as a house-cleaning enzyme that removes non-canonical purine nucleotides from the nucleotide pool, thus preventing their incorporation into DNA/RNA and avoiding chromosomal lesions.</text>
</comment>
<comment type="catalytic activity">
    <reaction evidence="1">
        <text>XTP + H2O = XMP + diphosphate + H(+)</text>
        <dbReference type="Rhea" id="RHEA:28610"/>
        <dbReference type="ChEBI" id="CHEBI:15377"/>
        <dbReference type="ChEBI" id="CHEBI:15378"/>
        <dbReference type="ChEBI" id="CHEBI:33019"/>
        <dbReference type="ChEBI" id="CHEBI:57464"/>
        <dbReference type="ChEBI" id="CHEBI:61314"/>
        <dbReference type="EC" id="3.6.1.66"/>
    </reaction>
</comment>
<comment type="catalytic activity">
    <reaction evidence="1">
        <text>dITP + H2O = dIMP + diphosphate + H(+)</text>
        <dbReference type="Rhea" id="RHEA:28342"/>
        <dbReference type="ChEBI" id="CHEBI:15377"/>
        <dbReference type="ChEBI" id="CHEBI:15378"/>
        <dbReference type="ChEBI" id="CHEBI:33019"/>
        <dbReference type="ChEBI" id="CHEBI:61194"/>
        <dbReference type="ChEBI" id="CHEBI:61382"/>
        <dbReference type="EC" id="3.6.1.66"/>
    </reaction>
</comment>
<comment type="catalytic activity">
    <reaction evidence="1">
        <text>ITP + H2O = IMP + diphosphate + H(+)</text>
        <dbReference type="Rhea" id="RHEA:29399"/>
        <dbReference type="ChEBI" id="CHEBI:15377"/>
        <dbReference type="ChEBI" id="CHEBI:15378"/>
        <dbReference type="ChEBI" id="CHEBI:33019"/>
        <dbReference type="ChEBI" id="CHEBI:58053"/>
        <dbReference type="ChEBI" id="CHEBI:61402"/>
        <dbReference type="EC" id="3.6.1.66"/>
    </reaction>
</comment>
<comment type="cofactor">
    <cofactor evidence="1">
        <name>Mg(2+)</name>
        <dbReference type="ChEBI" id="CHEBI:18420"/>
    </cofactor>
    <text evidence="1">Binds 1 Mg(2+) ion per subunit.</text>
</comment>
<comment type="subunit">
    <text evidence="1">Homodimer.</text>
</comment>
<comment type="similarity">
    <text evidence="1">Belongs to the HAM1 NTPase family.</text>
</comment>
<keyword id="KW-0378">Hydrolase</keyword>
<keyword id="KW-0460">Magnesium</keyword>
<keyword id="KW-0479">Metal-binding</keyword>
<keyword id="KW-0546">Nucleotide metabolism</keyword>
<keyword id="KW-0547">Nucleotide-binding</keyword>
<keyword id="KW-1185">Reference proteome</keyword>
<name>IXTPA_DESPS</name>
<gene>
    <name type="ordered locus">DP0707</name>
</gene>
<reference key="1">
    <citation type="journal article" date="2004" name="Environ. Microbiol.">
        <title>The genome of Desulfotalea psychrophila, a sulfate-reducing bacterium from permanently cold Arctic sediments.</title>
        <authorList>
            <person name="Rabus R."/>
            <person name="Ruepp A."/>
            <person name="Frickey T."/>
            <person name="Rattei T."/>
            <person name="Fartmann B."/>
            <person name="Stark M."/>
            <person name="Bauer M."/>
            <person name="Zibat A."/>
            <person name="Lombardot T."/>
            <person name="Becker I."/>
            <person name="Amann J."/>
            <person name="Gellner K."/>
            <person name="Teeling H."/>
            <person name="Leuschner W.D."/>
            <person name="Gloeckner F.-O."/>
            <person name="Lupas A.N."/>
            <person name="Amann R."/>
            <person name="Klenk H.-P."/>
        </authorList>
    </citation>
    <scope>NUCLEOTIDE SEQUENCE [LARGE SCALE GENOMIC DNA]</scope>
    <source>
        <strain>DSM 12343 / LSv54</strain>
    </source>
</reference>
<proteinExistence type="inferred from homology"/>
<sequence>MIPMIVLATTNQNKVKEFQEILKDFAIEIRSLAEFGPIPEAIEDGKDFDENAYKKAIHTAKILGIPAIADDSGLEVHALNGAPGVYSARYSGEGATDASNCDKLLEELAGKEDRSANFTCVISIATPGGPALTYEGRCDGKILTEKRGKSGFGYDPLFYFAEYDKTFAELSMEEKNRVSHRGKALAEIKAEAPQIIKWLEQRLSEEKPAKPDHSEFEGNDWSK</sequence>
<organism>
    <name type="scientific">Desulfotalea psychrophila (strain LSv54 / DSM 12343)</name>
    <dbReference type="NCBI Taxonomy" id="177439"/>
    <lineage>
        <taxon>Bacteria</taxon>
        <taxon>Pseudomonadati</taxon>
        <taxon>Thermodesulfobacteriota</taxon>
        <taxon>Desulfobulbia</taxon>
        <taxon>Desulfobulbales</taxon>
        <taxon>Desulfocapsaceae</taxon>
        <taxon>Desulfotalea</taxon>
    </lineage>
</organism>
<dbReference type="EC" id="3.6.1.66" evidence="1"/>
<dbReference type="EMBL" id="CR522870">
    <property type="protein sequence ID" value="CAG35436.1"/>
    <property type="molecule type" value="Genomic_DNA"/>
</dbReference>
<dbReference type="RefSeq" id="WP_011187952.1">
    <property type="nucleotide sequence ID" value="NC_006138.1"/>
</dbReference>
<dbReference type="SMR" id="Q6AQD7"/>
<dbReference type="STRING" id="177439.DP0707"/>
<dbReference type="KEGG" id="dps:DP0707"/>
<dbReference type="eggNOG" id="COG0127">
    <property type="taxonomic scope" value="Bacteria"/>
</dbReference>
<dbReference type="HOGENOM" id="CLU_082080_0_2_7"/>
<dbReference type="OrthoDB" id="9807456at2"/>
<dbReference type="Proteomes" id="UP000000602">
    <property type="component" value="Chromosome"/>
</dbReference>
<dbReference type="GO" id="GO:0005829">
    <property type="term" value="C:cytosol"/>
    <property type="evidence" value="ECO:0007669"/>
    <property type="project" value="TreeGrafter"/>
</dbReference>
<dbReference type="GO" id="GO:0035870">
    <property type="term" value="F:dITP diphosphatase activity"/>
    <property type="evidence" value="ECO:0007669"/>
    <property type="project" value="RHEA"/>
</dbReference>
<dbReference type="GO" id="GO:0036220">
    <property type="term" value="F:ITP diphosphatase activity"/>
    <property type="evidence" value="ECO:0007669"/>
    <property type="project" value="UniProtKB-EC"/>
</dbReference>
<dbReference type="GO" id="GO:0046872">
    <property type="term" value="F:metal ion binding"/>
    <property type="evidence" value="ECO:0007669"/>
    <property type="project" value="UniProtKB-KW"/>
</dbReference>
<dbReference type="GO" id="GO:0000166">
    <property type="term" value="F:nucleotide binding"/>
    <property type="evidence" value="ECO:0007669"/>
    <property type="project" value="UniProtKB-KW"/>
</dbReference>
<dbReference type="GO" id="GO:0017111">
    <property type="term" value="F:ribonucleoside triphosphate phosphatase activity"/>
    <property type="evidence" value="ECO:0007669"/>
    <property type="project" value="InterPro"/>
</dbReference>
<dbReference type="GO" id="GO:0036222">
    <property type="term" value="F:XTP diphosphatase activity"/>
    <property type="evidence" value="ECO:0007669"/>
    <property type="project" value="RHEA"/>
</dbReference>
<dbReference type="GO" id="GO:0009117">
    <property type="term" value="P:nucleotide metabolic process"/>
    <property type="evidence" value="ECO:0007669"/>
    <property type="project" value="UniProtKB-KW"/>
</dbReference>
<dbReference type="GO" id="GO:0009146">
    <property type="term" value="P:purine nucleoside triphosphate catabolic process"/>
    <property type="evidence" value="ECO:0007669"/>
    <property type="project" value="UniProtKB-UniRule"/>
</dbReference>
<dbReference type="CDD" id="cd00515">
    <property type="entry name" value="HAM1"/>
    <property type="match status" value="1"/>
</dbReference>
<dbReference type="FunFam" id="3.90.950.10:FF:000001">
    <property type="entry name" value="dITP/XTP pyrophosphatase"/>
    <property type="match status" value="1"/>
</dbReference>
<dbReference type="Gene3D" id="3.90.950.10">
    <property type="match status" value="1"/>
</dbReference>
<dbReference type="HAMAP" id="MF_01405">
    <property type="entry name" value="Non_canon_purine_NTPase"/>
    <property type="match status" value="1"/>
</dbReference>
<dbReference type="InterPro" id="IPR020922">
    <property type="entry name" value="dITP/XTP_pyrophosphatase"/>
</dbReference>
<dbReference type="InterPro" id="IPR029001">
    <property type="entry name" value="ITPase-like_fam"/>
</dbReference>
<dbReference type="InterPro" id="IPR002637">
    <property type="entry name" value="RdgB/HAM1"/>
</dbReference>
<dbReference type="NCBIfam" id="NF011397">
    <property type="entry name" value="PRK14822.1"/>
    <property type="match status" value="1"/>
</dbReference>
<dbReference type="NCBIfam" id="TIGR00042">
    <property type="entry name" value="RdgB/HAM1 family non-canonical purine NTP pyrophosphatase"/>
    <property type="match status" value="1"/>
</dbReference>
<dbReference type="PANTHER" id="PTHR11067:SF9">
    <property type="entry name" value="INOSINE TRIPHOSPHATE PYROPHOSPHATASE"/>
    <property type="match status" value="1"/>
</dbReference>
<dbReference type="PANTHER" id="PTHR11067">
    <property type="entry name" value="INOSINE TRIPHOSPHATE PYROPHOSPHATASE/HAM1 PROTEIN"/>
    <property type="match status" value="1"/>
</dbReference>
<dbReference type="Pfam" id="PF01725">
    <property type="entry name" value="Ham1p_like"/>
    <property type="match status" value="1"/>
</dbReference>
<dbReference type="SUPFAM" id="SSF52972">
    <property type="entry name" value="ITPase-like"/>
    <property type="match status" value="1"/>
</dbReference>